<name>DYH1A_CHLRE</name>
<reference key="1">
    <citation type="journal article" date="1999" name="J. Cell Biol.">
        <title>Domains in the 1-alpha dynein heavy chain required for inner arm assembly and flagellar motility in Chlamydomonas.</title>
        <authorList>
            <person name="Myster S.H."/>
            <person name="Knott J.A."/>
            <person name="Wysocki K.M."/>
            <person name="O'Toole E.T."/>
            <person name="Porter M.E."/>
        </authorList>
    </citation>
    <scope>NUCLEOTIDE SEQUENCE [GENOMIC DNA]</scope>
    <scope>CHARACTERIZATION</scope>
    <scope>MUTAGENESIS</scope>
    <source>
        <strain>21gr / CC-1690</strain>
    </source>
</reference>
<reference key="2">
    <citation type="journal article" date="1996" name="Genetics">
        <title>The dynein gene family in Chlamydomonas reinhardtii.</title>
        <authorList>
            <person name="Porter M.E."/>
            <person name="Knott J.A."/>
            <person name="Myster S.H."/>
            <person name="Farlow S.J."/>
        </authorList>
    </citation>
    <scope>NUCLEOTIDE SEQUENCE [GENOMIC DNA] OF 1914-2064</scope>
    <source>
        <strain>137c / CC-125</strain>
    </source>
</reference>
<reference key="3">
    <citation type="journal article" date="1987" name="J. Mol. Biol.">
        <title>High-pressure liquid chromatography fractionation of Chlamydomonas dynein extracts and characterization of inner-arm dynein subunits.</title>
        <authorList>
            <person name="Goodenough U.W."/>
            <person name="Gebhart B."/>
            <person name="Mermall V."/>
            <person name="Mitchell D.R."/>
            <person name="Heuser J.E."/>
        </authorList>
    </citation>
    <scope>DYNEIN COMPLEX ELECTRON MICROSCOPY</scope>
    <source>
        <strain>CC-620</strain>
    </source>
</reference>
<reference key="4">
    <citation type="journal article" date="1990" name="J. Cell Biol.">
        <title>Three distinct inner dynein arms in Chlamydomonas flagella: molecular composition and location in the axoneme.</title>
        <authorList>
            <person name="Piperno G."/>
            <person name="Ramanis Z."/>
            <person name="Smith E.F."/>
            <person name="Sale W.S."/>
        </authorList>
    </citation>
    <scope>SUBUNIT</scope>
</reference>
<reference key="5">
    <citation type="journal article" date="1997" name="J. Cell Biol.">
        <title>Phosphoregulation of an inner dynein arm complex in Chlamydomonas reinhardtii is altered in phototactic mutant strains.</title>
        <authorList>
            <person name="King S.J."/>
            <person name="Dutcher S.K."/>
        </authorList>
    </citation>
    <scope>REQUIREMENT OF I1 DYNEIN COMPLEX FOR PHOTOTAXIS</scope>
</reference>
<reference key="6">
    <citation type="journal article" date="1997" name="Mol. Biol. Cell">
        <title>The Chlamydomonas Dhc1 gene encodes a dynein heavy chain subunit required for assembly of the I1 inner arm complex.</title>
        <authorList>
            <person name="Myster S.H."/>
            <person name="Knott J.A."/>
            <person name="O'Toole E.T."/>
            <person name="Porter M.E."/>
        </authorList>
    </citation>
    <scope>ISOLATION</scope>
    <scope>DISRUPTION PHENOTYPE</scope>
    <source>
        <strain>21gr / CC-1690</strain>
    </source>
</reference>
<protein>
    <recommendedName>
        <fullName>Dynein-1-alpha heavy chain, flagellar inner arm I1 complex</fullName>
    </recommendedName>
    <alternativeName>
        <fullName>1-alpha DHC</fullName>
    </alternativeName>
    <alternativeName>
        <fullName>Dynein-1, subspecies f</fullName>
    </alternativeName>
</protein>
<gene>
    <name type="primary">DHC1</name>
    <name type="synonym">IDA1</name>
    <name type="synonym">PF9</name>
</gene>
<organism>
    <name type="scientific">Chlamydomonas reinhardtii</name>
    <name type="common">Chlamydomonas smithii</name>
    <dbReference type="NCBI Taxonomy" id="3055"/>
    <lineage>
        <taxon>Eukaryota</taxon>
        <taxon>Viridiplantae</taxon>
        <taxon>Chlorophyta</taxon>
        <taxon>core chlorophytes</taxon>
        <taxon>Chlorophyceae</taxon>
        <taxon>CS clade</taxon>
        <taxon>Chlamydomonadales</taxon>
        <taxon>Chlamydomonadaceae</taxon>
        <taxon>Chlamydomonas</taxon>
    </lineage>
</organism>
<feature type="chain" id="PRO_0000114646" description="Dynein-1-alpha heavy chain, flagellar inner arm I1 complex">
    <location>
        <begin position="1"/>
        <end position="4625"/>
    </location>
</feature>
<feature type="region of interest" description="Stem" evidence="1">
    <location>
        <begin position="1"/>
        <end position="1919"/>
    </location>
</feature>
<feature type="region of interest" description="Disordered" evidence="3">
    <location>
        <begin position="70"/>
        <end position="163"/>
    </location>
</feature>
<feature type="region of interest" description="AAA 1" evidence="1">
    <location>
        <begin position="1920"/>
        <end position="2141"/>
    </location>
</feature>
<feature type="region of interest" description="AAA 2" evidence="1">
    <location>
        <begin position="2201"/>
        <end position="2437"/>
    </location>
</feature>
<feature type="region of interest" description="AAA 3" evidence="1">
    <location>
        <begin position="2550"/>
        <end position="2800"/>
    </location>
</feature>
<feature type="region of interest" description="AAA 4" evidence="1">
    <location>
        <begin position="2906"/>
        <end position="3155"/>
    </location>
</feature>
<feature type="region of interest" description="Stalk" evidence="1">
    <location>
        <begin position="3192"/>
        <end position="3494"/>
    </location>
</feature>
<feature type="region of interest" description="AAA 5" evidence="1">
    <location>
        <begin position="3542"/>
        <end position="3773"/>
    </location>
</feature>
<feature type="region of interest" description="AAA 6" evidence="1">
    <location>
        <begin position="3998"/>
        <end position="4216"/>
    </location>
</feature>
<feature type="coiled-coil region" evidence="2">
    <location>
        <begin position="1227"/>
        <end position="1259"/>
    </location>
</feature>
<feature type="coiled-coil region" evidence="2">
    <location>
        <begin position="1339"/>
        <end position="1409"/>
    </location>
</feature>
<feature type="coiled-coil region" evidence="2">
    <location>
        <begin position="3192"/>
        <end position="3297"/>
    </location>
</feature>
<feature type="coiled-coil region" evidence="2">
    <location>
        <begin position="3400"/>
        <end position="3494"/>
    </location>
</feature>
<feature type="coiled-coil region" evidence="2">
    <location>
        <begin position="3701"/>
        <end position="3788"/>
    </location>
</feature>
<feature type="compositionally biased region" description="Acidic residues" evidence="3">
    <location>
        <begin position="70"/>
        <end position="84"/>
    </location>
</feature>
<feature type="compositionally biased region" description="Low complexity" evidence="3">
    <location>
        <begin position="111"/>
        <end position="140"/>
    </location>
</feature>
<feature type="compositionally biased region" description="Acidic residues" evidence="3">
    <location>
        <begin position="144"/>
        <end position="155"/>
    </location>
</feature>
<feature type="binding site" evidence="2">
    <location>
        <begin position="960"/>
        <end position="967"/>
    </location>
    <ligand>
        <name>ATP</name>
        <dbReference type="ChEBI" id="CHEBI:30616"/>
    </ligand>
</feature>
<feature type="binding site" evidence="2">
    <location>
        <begin position="1958"/>
        <end position="1965"/>
    </location>
    <ligand>
        <name>ATP</name>
        <dbReference type="ChEBI" id="CHEBI:30616"/>
    </ligand>
</feature>
<feature type="binding site" evidence="2">
    <location>
        <begin position="2242"/>
        <end position="2249"/>
    </location>
    <ligand>
        <name>ATP</name>
        <dbReference type="ChEBI" id="CHEBI:30616"/>
    </ligand>
</feature>
<feature type="binding site" evidence="2">
    <location>
        <begin position="2588"/>
        <end position="2595"/>
    </location>
    <ligand>
        <name>ATP</name>
        <dbReference type="ChEBI" id="CHEBI:30616"/>
    </ligand>
</feature>
<feature type="binding site" evidence="2">
    <location>
        <begin position="2945"/>
        <end position="2952"/>
    </location>
    <ligand>
        <name>ATP</name>
        <dbReference type="ChEBI" id="CHEBI:30616"/>
    </ligand>
</feature>
<feature type="binding site" evidence="2">
    <location>
        <begin position="3680"/>
        <end position="3687"/>
    </location>
    <ligand>
        <name>ATP</name>
        <dbReference type="ChEBI" id="CHEBI:30616"/>
    </ligand>
</feature>
<proteinExistence type="evidence at protein level"/>
<sequence length="4625" mass="522843">MDRRLEWVKEKACLGLGVEPNLFEAAIANPESRARVTAFLDGTVTSSALLFALEEATIYVEEYQEVLAEEQAPEAEDGEGEEHDGQEPGEAGGEGAEGSTAPGDSGDGQPEDAPAAAAEANGANPEDEAAAPADGAADGAAGEGGEEGDGAEGDEPPAPPAPKYVRRVISVPKVVSKLNVALGSLPEELSVFPVFYFILNRSGHVAAEELDSAVEFGLLSEGPSLRILEQMLSSVFVPILVQMSGGDVASGGVLMQSMTDNSHRELLGNMQKFHSQVTQALQQLTGDVTLQLPDFPLEDMDRAAADTDLVMQLEQYMAEWSQVLASVLQRESQKHPTGKGPLAEIEFWRERNAVLSSLYEQLNLPQVKRMILVVEKGSDDRNLMAGFKSQLGELTKLATEARDNVKFLTTLERHFKNIATGPLGGILDTLPPMMNALRMVWIISRHYSDDQRMGSLFQRIAREIGDRVEAAVDLRHIFRMTSADAVELLKVCKSVLEHWLQTYMAMREKIELSGRDARWEFPKQLLFARTNYMAEICTDLIEMVEIVDDFFRFLGPELKTVTGDTAGIDRVVHRVVAMYEPIESISFNVFDYGNQHEWKAAKQQFYADNEDIKEATRELIDTSFRKLRSAEGACELLQSFKSIKSKGAIQKQVMNKFNDILEQFAREIEQTADIFERNKDAPPVTKNQPPVAGAIKWVRSLLERLKRTMAKLLSTEEEIIRTTELGQAVESKFKSFARSVMLTEKKWFSSWSDSINGVAMQHLKQTIFRRSAATNRVEVNFHPDLVRLIRETRYLDRMGFPIPEIALNVALQEDKFLQWLEGLNSMLFKYYESIDQLTPVERELMERKLEELESCLQPGFTILNWNSLGITEFIGTCDKAIATFQQLVKQVQKNSGIIEQVVYAIAGAQLVTEPEEGAEVMDLQEFYEDIERQRLAALESLVKKYRTISPLLGKIEEVVAGTNSGKSPALSSYYSFWERAIFNALNTMVLCAMTKLQDMIEQRSKHAEGGRKPPLFKVTVSLQSVDVVVQPPMTEVNKALGRLVRSLVESTKAFVRWMDGTCVETPEQRGATDDDEPIVFTFYWDVAANPQVIKTMLNLNQSIQRAITSVNKYAESWRRHQALWKTDKNSVLDKFKARDPSAAQFEDKLSKYAKMATEISAQAKDFDQDFIRVSCHALASSVCDEAQAWVRAIAQTMRELDAVTESQLRDKIAKYQTALHRPPDTLEELKQVLNTVNTIRGESMVMELRYADLEERYRTRLLYATNPEEESQCAHELASASQVRALWTELLNEAEAVDWSLEETKKKFSETTRSQVSDFAAITAELWEKFRTTGPGLPTVELASGLDELHKYESNLADALRQREQLVLAEKLFGMEITAYPELAQLESEIRKLAQVYGVYAEHAEAVRQYGGQLWSELDVGKMMAGTEAILTKLRKLKSLKLLPVYELVEKEIQGFYNSLPLMKELKSEALRKRHWTRLMEVTGQEFDMDPKTFTLGNMFAMQLHKYAEEIGKITNAAVKELTIESEIRKLADVWREQRFELGKYMKGPEDRGWVLRSTEDILVLLEDMGLNLQSMMASPFVRPFLTEVRAWEQKLSLIGECIEVWMHVQRKWMYLESIFVGSDDIRHQLPAEAKRFDNIDRQWQKIMNDTAKNTVVLDACMADGRLDLLKSLSEQLEVCQKSLSEYLDTKRCAFPRFYFISDDELLSILGTSDPTSVQEHMLKLFDNCAALVFGRGNKTITGMVSSEKEGFEFRNVVPIEGAVELWMTNVEAEMRKTLYQITKEGIFFYAKTPRTKWISENLGMVTLVGSQIWWTWETEDVFRRVRDGNKHSMKEFAAKLTGQLSELTSMVRSDLSNEVRKKVNTLIIIDVHARDIIDTYVRDSIVDAREFAWESQLRFYWDRQQDDILIRQCTGLFKYGYEYMGLNGRLVITALTDRCYMTLTTALTYRLGGAPAGPAGTGKTETTKDLAKSMALLCVVFNCGEGLDYKAMGSIFSGLVQCGAWGCFDEFNRIEAEVLSVVSSQIKNIQEALKNDLTRFQFEGKEISIDPRTGIFITMNPGYAGRTELPDNLKALFRPVTMVVPDLEQICEIMLFSEGFDSAKVLAKKMTVLYKLSREQLSKQHHYDFGLRALKSVLVMAGSLKRGAPDMSEQLVLMRALRDMNLPKFIFDDVPLFLGLINDLFPGMDCPRVRYPQFNDVVEADLADQGFKVLTEPSEQVDKVVQLYEVMMTRHTTMVVGQTGGGKTVILNTLARAQTKLGKKTHLYTINPKAISVAELYGVLDKDTRDWTDGLLSNIFREMNKPLPAERDEARYLVFDGDVDAVWVENMNSVMDDNKLLTLPNGERIRLQNHCKLLFEVFDLQYASPATISRCGMVYVDSRNLGYKPYIYTWLNSRAKQAEVDILRGLFEKYAVPSVDWILEGIDGEELVRRPKQAVPVTNLNMITQLCNLLNATITDHPRMSDPQILEAIFIFCTIWSLGAAIVQRPESPDRDRFDAFVKHIASMGLVDGERVAATQLPARSLYEYCFDTNEGVWKSWRSYLQPYEPPADGAFAKILVPTVDVVRSTWLLNTVVAAGKPCLFVGESGTAKSVTIANYLAHLDSTINIVLNVNFSSRTSSLDVQRAIEDSTEKRTKDTYGPPMGKRLLMFIDDLNMPRVDTYGTQQPIALLKLFIERKGLYDRGKELSWKNMKDVQVVGAMGPPGGARNPVDPRFISLFSVFEIQFPSNENLRTIYQAILSRHLAKLPTDEIRDQLGERLTDVTLELYNFIIDKLPPTPSRFHYIFNLRDLSRIYEGLLLTVGDVFKTPEQFLRLWRNECLRVLHDRLISTDDKRVMTERLEALVQQKFPNLAAHTLASPVLFGDFKNVINELQGEGEVAPRMYDDLGDYNSIKPLFEDVMTNFYNRKRKPMNLVFFEDALEHLTRIHRTLRLPQGNCLLVGVGGSGKQSLSKLAAFTAGCEVFEITLTRGYDELAFREDLKRLYAMLGSDNKRVMFLFTDAHVADEGFLELINNMLTSGMVPALYDGAEKDGLIGSVRAEVEKKGLLATKESCWSYYVDKCRNNLHVVLAMSPVGETLRSRCRNFPGMVNNTVIDWFEPWPEQALTSVASVFLAEEALPEALRPQIVEHMVTVHQSVRTFSTRFLEELRRYNYVTPKNYLDFINNYKRALATNRRTIEDTVTRLSGGLEKLIQAAVEVDAMQKELSQAQVVVAQATKECNELLEVISTNTVDVETKAKAAAIKEAQLKVDSEQIAIEKAEAEAALEEAIPALEEAAAALQDLSKDHITEIRSYAKPPEQVQKVCECVVILRNIKDVSWLGAKSMMADGNFLRSLVEFDKDSLTDKQVKKVKEYFKDPKAPLTYDSLRAISTAGAGLLKWVLAMVNYNNVARTVEPKRKKVAESEKNLRIAQKDLASTKLELQSLNDQLGKLRTQFEEKTAEQQDLKAKADLMERRLIAASKLIAGLGSERERWTRDIADLESRRDRLIGDCLLTSSFLSYTGAFTATYRHAMVYEMWQDDVKARGVPVTQPFRLEALLTSDVETTGWASEGLPSDELSIQNGILTVRANRWPLCIDPQMQAVNWIKSREGKMLEGKVKTFNDSDFLKQLELSIQYGFPFLFENLDEYIDPVIDPVLEKNLVPGDGKFVIKLGDKEVEWDSNFRLYMTSKLSNPHYGPEISGKTMIINYGVTQQGLTEQLLNVTLRHERSDLEEAREALIKQMSENKATLQALEDTLLRELSNAQGNILDNSELIATLESAKLKAVEIAEKLEASKVTAAEIEETRVRYSPAAKRGAILFFVIAGLSAITNMYEYSLASFLVVFNGSLHSSRRDASIEGRLRNIIDTLTYDVYAYTCLGLFERHKLMFSFQMTCKILEGDTPLDPQLLDFFLKGNLSLEKAARRKPFDWFPDAGWQDLMRLVELGQKKIGADGRMHALGSLANDVESDEAAWRTWYDLEAPEEAELPCGYQSFLSDFEKLCLMRCLRMDRVTVGITRFVIGVMGEKYVQPPVLEYRSIYKQSTETTPIVFVLSPGADPAFDVFKLGEEMGFRPGAKLKYMALGQGMGPKAQELIETGATRGLWIMLQNCHLLPTWLKTLEKILEKITKPHADFRLWLTTELTDRFPLGVLQRSLKVVTEPPNGLKLNMRQSYSKITEEVLADCPHQAFRPLVYVLGFFHAVVQERRKYGKLGWNVPYDFNETDFRISMALISTYLTKAWDAQDDLIPWGTLRYLIGEAMYGGRVSDSYDRRILTTYLDEYLGDFLFDTFQPFRFYACKDYEIAIPQTGSRDTYLKAVEALPLVQSPEAFGLNANADISYYTSATKAIWTDLVDLQPRTGGGGGGVAREEFIGGVARDIAAKIPEPFDLPQLRKELGTPSPTQVVLLQELERWNSVLGVMVSSLRDLQRALSGEIGFSSRLEELASSLYNGKLPAMWARLNPATEKALGAWMLWFGRRYRQYKDWTEHGEPKVIWLSGLHIPETYIAALVQAACRDKGWPLDKSTLYTKVTKFTDPYQVSERPKYGCYMSGLYLEGAAWDLEASQLRKQDPKVLVNELPILQVIPIEANKLKLANTFRAPVYVTQARRNAMGVGLVFDADLASAEHSSHWVLQGVALVLNIDQ</sequence>
<dbReference type="EMBL" id="AJ243806">
    <property type="protein sequence ID" value="CAB56598.1"/>
    <property type="molecule type" value="Genomic_DNA"/>
</dbReference>
<dbReference type="EMBL" id="U61364">
    <property type="protein sequence ID" value="AAC49514.1"/>
    <property type="molecule type" value="Genomic_DNA"/>
</dbReference>
<dbReference type="PIR" id="S72239">
    <property type="entry name" value="S72239"/>
</dbReference>
<dbReference type="SMR" id="Q9SMH3"/>
<dbReference type="PaxDb" id="3055-EDO96546"/>
<dbReference type="eggNOG" id="KOG3595">
    <property type="taxonomic scope" value="Eukaryota"/>
</dbReference>
<dbReference type="GO" id="GO:0036156">
    <property type="term" value="C:inner dynein arm"/>
    <property type="evidence" value="ECO:0000314"/>
    <property type="project" value="GO_Central"/>
</dbReference>
<dbReference type="GO" id="GO:0005874">
    <property type="term" value="C:microtubule"/>
    <property type="evidence" value="ECO:0007669"/>
    <property type="project" value="UniProtKB-KW"/>
</dbReference>
<dbReference type="GO" id="GO:0031514">
    <property type="term" value="C:motile cilium"/>
    <property type="evidence" value="ECO:0007669"/>
    <property type="project" value="UniProtKB-SubCell"/>
</dbReference>
<dbReference type="GO" id="GO:0005524">
    <property type="term" value="F:ATP binding"/>
    <property type="evidence" value="ECO:0007669"/>
    <property type="project" value="UniProtKB-KW"/>
</dbReference>
<dbReference type="GO" id="GO:0016887">
    <property type="term" value="F:ATP hydrolysis activity"/>
    <property type="evidence" value="ECO:0007669"/>
    <property type="project" value="InterPro"/>
</dbReference>
<dbReference type="GO" id="GO:0045505">
    <property type="term" value="F:dynein intermediate chain binding"/>
    <property type="evidence" value="ECO:0007669"/>
    <property type="project" value="InterPro"/>
</dbReference>
<dbReference type="GO" id="GO:0051959">
    <property type="term" value="F:dynein light intermediate chain binding"/>
    <property type="evidence" value="ECO:0007669"/>
    <property type="project" value="InterPro"/>
</dbReference>
<dbReference type="GO" id="GO:0008017">
    <property type="term" value="F:microtubule binding"/>
    <property type="evidence" value="ECO:0000314"/>
    <property type="project" value="GO_Central"/>
</dbReference>
<dbReference type="GO" id="GO:0003777">
    <property type="term" value="F:microtubule motor activity"/>
    <property type="evidence" value="ECO:0000314"/>
    <property type="project" value="GO_Central"/>
</dbReference>
<dbReference type="GO" id="GO:0008569">
    <property type="term" value="F:minus-end-directed microtubule motor activity"/>
    <property type="evidence" value="ECO:0007669"/>
    <property type="project" value="InterPro"/>
</dbReference>
<dbReference type="GO" id="GO:0060294">
    <property type="term" value="P:cilium movement involved in cell motility"/>
    <property type="evidence" value="ECO:0000315"/>
    <property type="project" value="GO_Central"/>
</dbReference>
<dbReference type="GO" id="GO:0036159">
    <property type="term" value="P:inner dynein arm assembly"/>
    <property type="evidence" value="ECO:0000315"/>
    <property type="project" value="GO_Central"/>
</dbReference>
<dbReference type="FunFam" id="3.40.50.300:FF:000153">
    <property type="entry name" value="Dynein axonemal heavy chain 1"/>
    <property type="match status" value="1"/>
</dbReference>
<dbReference type="FunFam" id="1.10.8.720:FF:000005">
    <property type="entry name" value="Dynein axonemal heavy chain 10"/>
    <property type="match status" value="1"/>
</dbReference>
<dbReference type="FunFam" id="1.20.1270.280:FF:000005">
    <property type="entry name" value="Dynein axonemal heavy chain 10"/>
    <property type="match status" value="1"/>
</dbReference>
<dbReference type="FunFam" id="1.20.920.30:FF:000007">
    <property type="entry name" value="Dynein axonemal heavy chain 10"/>
    <property type="match status" value="1"/>
</dbReference>
<dbReference type="FunFam" id="3.10.490.20:FF:000006">
    <property type="entry name" value="Dynein axonemal heavy chain 10"/>
    <property type="match status" value="1"/>
</dbReference>
<dbReference type="FunFam" id="3.40.50.300:FF:000884">
    <property type="entry name" value="Dynein axonemal heavy chain 10"/>
    <property type="match status" value="1"/>
</dbReference>
<dbReference type="FunFam" id="1.10.8.1220:FF:000001">
    <property type="entry name" value="Dynein axonemal heavy chain 5"/>
    <property type="match status" value="1"/>
</dbReference>
<dbReference type="FunFam" id="3.20.180.20:FF:000001">
    <property type="entry name" value="Dynein axonemal heavy chain 5"/>
    <property type="match status" value="1"/>
</dbReference>
<dbReference type="FunFam" id="3.40.50.300:FF:002141">
    <property type="entry name" value="Dynein heavy chain"/>
    <property type="match status" value="1"/>
</dbReference>
<dbReference type="FunFam" id="1.20.58.1120:FF:000008">
    <property type="entry name" value="Dynein heavy chain 10, axonemal"/>
    <property type="match status" value="1"/>
</dbReference>
<dbReference type="FunFam" id="1.10.8.710:FF:000002">
    <property type="entry name" value="dynein heavy chain 17, axonemal"/>
    <property type="match status" value="1"/>
</dbReference>
<dbReference type="FunFam" id="1.20.140.100:FF:000001">
    <property type="entry name" value="dynein heavy chain 17, axonemal"/>
    <property type="match status" value="1"/>
</dbReference>
<dbReference type="FunFam" id="1.10.287.2620:FF:000002">
    <property type="entry name" value="Dynein heavy chain 2, axonemal"/>
    <property type="match status" value="1"/>
</dbReference>
<dbReference type="FunFam" id="1.20.920.20:FF:000001">
    <property type="entry name" value="dynein heavy chain 2, axonemal"/>
    <property type="match status" value="1"/>
</dbReference>
<dbReference type="FunFam" id="3.40.50.300:FF:000063">
    <property type="entry name" value="dynein heavy chain 6, axonemal"/>
    <property type="match status" value="1"/>
</dbReference>
<dbReference type="FunFam" id="3.40.50.300:FF:000049">
    <property type="entry name" value="Dynein, axonemal, heavy chain 5"/>
    <property type="match status" value="1"/>
</dbReference>
<dbReference type="FunFam" id="1.10.472.130:FF:000037">
    <property type="entry name" value="Flagellar inner arm dynein 1 heavy chain alpha"/>
    <property type="match status" value="1"/>
</dbReference>
<dbReference type="Gene3D" id="1.10.287.2620">
    <property type="match status" value="1"/>
</dbReference>
<dbReference type="Gene3D" id="1.10.472.130">
    <property type="match status" value="1"/>
</dbReference>
<dbReference type="Gene3D" id="1.10.8.1220">
    <property type="match status" value="1"/>
</dbReference>
<dbReference type="Gene3D" id="1.10.8.710">
    <property type="match status" value="1"/>
</dbReference>
<dbReference type="Gene3D" id="1.20.1270.280">
    <property type="match status" value="1"/>
</dbReference>
<dbReference type="Gene3D" id="1.20.58.1120">
    <property type="match status" value="1"/>
</dbReference>
<dbReference type="Gene3D" id="1.20.920.20">
    <property type="match status" value="1"/>
</dbReference>
<dbReference type="Gene3D" id="1.20.920.30">
    <property type="match status" value="1"/>
</dbReference>
<dbReference type="Gene3D" id="3.10.490.20">
    <property type="match status" value="1"/>
</dbReference>
<dbReference type="Gene3D" id="6.10.140.1060">
    <property type="match status" value="1"/>
</dbReference>
<dbReference type="Gene3D" id="1.20.140.100">
    <property type="entry name" value="Dynein heavy chain, N-terminal domain 2"/>
    <property type="match status" value="1"/>
</dbReference>
<dbReference type="Gene3D" id="3.20.180.20">
    <property type="entry name" value="Dynein heavy chain, N-terminal domain 2"/>
    <property type="match status" value="1"/>
</dbReference>
<dbReference type="Gene3D" id="3.40.50.300">
    <property type="entry name" value="P-loop containing nucleotide triphosphate hydrolases"/>
    <property type="match status" value="5"/>
</dbReference>
<dbReference type="Gene3D" id="1.10.8.720">
    <property type="entry name" value="Region D6 of dynein motor"/>
    <property type="match status" value="1"/>
</dbReference>
<dbReference type="InterPro" id="IPR003593">
    <property type="entry name" value="AAA+_ATPase"/>
</dbReference>
<dbReference type="InterPro" id="IPR035699">
    <property type="entry name" value="AAA_6"/>
</dbReference>
<dbReference type="InterPro" id="IPR035706">
    <property type="entry name" value="AAA_9"/>
</dbReference>
<dbReference type="InterPro" id="IPR041658">
    <property type="entry name" value="AAA_lid_11"/>
</dbReference>
<dbReference type="InterPro" id="IPR042219">
    <property type="entry name" value="AAA_lid_11_sf"/>
</dbReference>
<dbReference type="InterPro" id="IPR026983">
    <property type="entry name" value="DHC"/>
</dbReference>
<dbReference type="InterPro" id="IPR041589">
    <property type="entry name" value="DNAH3_AAA_lid_1"/>
</dbReference>
<dbReference type="InterPro" id="IPR042222">
    <property type="entry name" value="Dynein_2_N"/>
</dbReference>
<dbReference type="InterPro" id="IPR043157">
    <property type="entry name" value="Dynein_AAA1S"/>
</dbReference>
<dbReference type="InterPro" id="IPR041466">
    <property type="entry name" value="Dynein_AAA5_ext"/>
</dbReference>
<dbReference type="InterPro" id="IPR041228">
    <property type="entry name" value="Dynein_C"/>
</dbReference>
<dbReference type="InterPro" id="IPR043160">
    <property type="entry name" value="Dynein_C_barrel"/>
</dbReference>
<dbReference type="InterPro" id="IPR024743">
    <property type="entry name" value="Dynein_HC_stalk"/>
</dbReference>
<dbReference type="InterPro" id="IPR024317">
    <property type="entry name" value="Dynein_heavy_chain_D4_dom"/>
</dbReference>
<dbReference type="InterPro" id="IPR004273">
    <property type="entry name" value="Dynein_heavy_D6_P-loop"/>
</dbReference>
<dbReference type="InterPro" id="IPR013602">
    <property type="entry name" value="Dynein_heavy_linker"/>
</dbReference>
<dbReference type="InterPro" id="IPR013594">
    <property type="entry name" value="Dynein_heavy_tail"/>
</dbReference>
<dbReference type="InterPro" id="IPR042228">
    <property type="entry name" value="Dynein_linker_3"/>
</dbReference>
<dbReference type="InterPro" id="IPR027417">
    <property type="entry name" value="P-loop_NTPase"/>
</dbReference>
<dbReference type="PANTHER" id="PTHR22878:SF63">
    <property type="entry name" value="DYNEIN AXONEMAL HEAVY CHAIN 10"/>
    <property type="match status" value="1"/>
</dbReference>
<dbReference type="PANTHER" id="PTHR22878">
    <property type="entry name" value="DYNEIN HEAVY CHAIN 6, AXONEMAL-LIKE-RELATED"/>
    <property type="match status" value="1"/>
</dbReference>
<dbReference type="Pfam" id="PF12774">
    <property type="entry name" value="AAA_6"/>
    <property type="match status" value="1"/>
</dbReference>
<dbReference type="Pfam" id="PF12775">
    <property type="entry name" value="AAA_7"/>
    <property type="match status" value="1"/>
</dbReference>
<dbReference type="Pfam" id="PF12780">
    <property type="entry name" value="AAA_8"/>
    <property type="match status" value="1"/>
</dbReference>
<dbReference type="Pfam" id="PF12781">
    <property type="entry name" value="AAA_9"/>
    <property type="match status" value="1"/>
</dbReference>
<dbReference type="Pfam" id="PF17857">
    <property type="entry name" value="AAA_lid_1"/>
    <property type="match status" value="1"/>
</dbReference>
<dbReference type="Pfam" id="PF18198">
    <property type="entry name" value="AAA_lid_11"/>
    <property type="match status" value="1"/>
</dbReference>
<dbReference type="Pfam" id="PF08385">
    <property type="entry name" value="DHC_N1"/>
    <property type="match status" value="1"/>
</dbReference>
<dbReference type="Pfam" id="PF08393">
    <property type="entry name" value="DHC_N2"/>
    <property type="match status" value="1"/>
</dbReference>
<dbReference type="Pfam" id="PF17852">
    <property type="entry name" value="Dynein_AAA_lid"/>
    <property type="match status" value="1"/>
</dbReference>
<dbReference type="Pfam" id="PF18199">
    <property type="entry name" value="Dynein_C"/>
    <property type="match status" value="1"/>
</dbReference>
<dbReference type="Pfam" id="PF03028">
    <property type="entry name" value="Dynein_heavy"/>
    <property type="match status" value="1"/>
</dbReference>
<dbReference type="Pfam" id="PF12777">
    <property type="entry name" value="MT"/>
    <property type="match status" value="1"/>
</dbReference>
<dbReference type="SMART" id="SM00382">
    <property type="entry name" value="AAA"/>
    <property type="match status" value="4"/>
</dbReference>
<dbReference type="SUPFAM" id="SSF52540">
    <property type="entry name" value="P-loop containing nucleoside triphosphate hydrolases"/>
    <property type="match status" value="4"/>
</dbReference>
<keyword id="KW-0067">ATP-binding</keyword>
<keyword id="KW-0966">Cell projection</keyword>
<keyword id="KW-0969">Cilium</keyword>
<keyword id="KW-0970">Cilium biogenesis/degradation</keyword>
<keyword id="KW-0175">Coiled coil</keyword>
<keyword id="KW-0963">Cytoplasm</keyword>
<keyword id="KW-0206">Cytoskeleton</keyword>
<keyword id="KW-0243">Dynein</keyword>
<keyword id="KW-0282">Flagellum</keyword>
<keyword id="KW-0493">Microtubule</keyword>
<keyword id="KW-0505">Motor protein</keyword>
<keyword id="KW-0547">Nucleotide-binding</keyword>
<keyword id="KW-0677">Repeat</keyword>
<evidence type="ECO:0000250" key="1"/>
<evidence type="ECO:0000255" key="2"/>
<evidence type="ECO:0000256" key="3">
    <source>
        <dbReference type="SAM" id="MobiDB-lite"/>
    </source>
</evidence>
<evidence type="ECO:0000269" key="4">
    <source>
    </source>
</evidence>
<evidence type="ECO:0000269" key="5">
    <source>
    </source>
</evidence>
<evidence type="ECO:0000305" key="6"/>
<comment type="function">
    <text>Force generating protein of eukaryotic cilia and flagella. Produces force towards the minus ends of microtubules. Dynein has ATPase activity; the force-producing power stroke is thought to occur on release of ADP. Required for assembly of the I1 inner arm complex and its targeting to the appropriate axoneme location. Also required for phototaxis.</text>
</comment>
<comment type="subunit">
    <text evidence="4">The I1 inner arm complex (also known as the f dynein complex) is a two-headed isoform composed of two heavy chains (1-alpha and 1-beta), three intermediate chains and three light chains. I1 occupies a specific position proximal to the first radial spoke and repeats every 96 nm along the length of the axoneme.</text>
</comment>
<comment type="subcellular location">
    <subcellularLocation>
        <location>Cell projection</location>
        <location>Cilium</location>
        <location>Flagellum</location>
    </subcellularLocation>
    <subcellularLocation>
        <location>Cytoplasm</location>
        <location>Cytoskeleton</location>
        <location>Flagellum axoneme</location>
    </subcellularLocation>
</comment>
<comment type="induction">
    <text>By deflagellation.</text>
</comment>
<comment type="domain">
    <text>Dynein heavy chains probably consist of an N-terminal stem (which binds cargo and interacts with other dynein components), and the head or motor domain. The motor contains six tandemly-linked AAA domains in the head, which form a ring. A stalk-like structure (formed by two of the coiled coil domains) protrudes between AAA 4 and AAA 5 and terminates in a microtubule-binding site. A seventh domain may also contribute to this ring; it is not clear whether the N-terminus or the C-terminus forms this extra domain. There are four well-conserved and two non-conserved ATPase sites, one per AAA domain. Probably only one of these (within AAA 1) actually hydrolyzes ATP, the others may serve a regulatory function.</text>
</comment>
<comment type="domain">
    <text>A construct expressing the first 1249 amino acids but lacking the motor domain is able to assemble I1 complexes and target them to their correct location on the axoneme, although motility is not normal. Phototaxis is also restored.</text>
</comment>
<comment type="disruption phenotype">
    <text evidence="5">Cells swim slowly with near normal beat frequencies but aberrant waveforms, and are unable to phototax.</text>
</comment>
<comment type="similarity">
    <text evidence="6">Belongs to the dynein heavy chain family.</text>
</comment>
<comment type="online information" name="Protein Spotlight">
    <link uri="https://www.proteinspotlight.org/back_issues/034"/>
    <text>The kink behind the wriggle - Issue 34 of May 2003</text>
</comment>
<accession>Q9SMH3</accession>
<accession>Q96388</accession>